<sequence length="113" mass="13026">MDTVRVAFLLVLVLAVSLGQADKDENRMEMQEKTEQGKSYLDFAENLLLQKLEELEAKLLEEDSEESRNSRQKRCIGEGVPCDENDPRCCSGLVCLKPTLHGIWYKSYYCYKK</sequence>
<protein>
    <recommendedName>
        <fullName>U11-theraphotoxin-Hhn1a</fullName>
        <shortName>U11-TRTX-Hhn1a</shortName>
    </recommendedName>
    <alternativeName>
        <fullName>Hainantoxin-XVI.28</fullName>
        <shortName>HNTX-XVI.28</shortName>
    </alternativeName>
    <alternativeName>
        <fullName>Peptide F4-19.87</fullName>
    </alternativeName>
</protein>
<dbReference type="EMBL" id="GU293120">
    <property type="protein sequence ID" value="ADB56936.1"/>
    <property type="molecule type" value="Genomic_DNA"/>
</dbReference>
<dbReference type="ArachnoServer" id="AS001592">
    <property type="toxin name" value="U11-theraphotoxin-Hhn1a"/>
</dbReference>
<dbReference type="GO" id="GO:0005576">
    <property type="term" value="C:extracellular region"/>
    <property type="evidence" value="ECO:0007669"/>
    <property type="project" value="UniProtKB-SubCell"/>
</dbReference>
<dbReference type="GO" id="GO:0019871">
    <property type="term" value="F:sodium channel inhibitor activity"/>
    <property type="evidence" value="ECO:0007669"/>
    <property type="project" value="InterPro"/>
</dbReference>
<dbReference type="GO" id="GO:0090729">
    <property type="term" value="F:toxin activity"/>
    <property type="evidence" value="ECO:0007669"/>
    <property type="project" value="UniProtKB-KW"/>
</dbReference>
<dbReference type="InterPro" id="IPR012627">
    <property type="entry name" value="Toxin_22"/>
</dbReference>
<dbReference type="Pfam" id="PF08092">
    <property type="entry name" value="Toxin_22"/>
    <property type="match status" value="1"/>
</dbReference>
<reference key="1">
    <citation type="journal article" date="2010" name="J. Proteome Res.">
        <title>Molecular diversification of peptide toxins from the tarantula Haplopelma hainanum (Ornithoctonus hainana) venom based on transcriptomic, peptidomic, and genomic analyses.</title>
        <authorList>
            <person name="Tang X."/>
            <person name="Zhang Y."/>
            <person name="Hu W."/>
            <person name="Xu D."/>
            <person name="Tao H."/>
            <person name="Yang X."/>
            <person name="Li Y."/>
            <person name="Jiang L."/>
            <person name="Liang S."/>
        </authorList>
    </citation>
    <scope>NUCLEOTIDE SEQUENCE [LARGE SCALE MRNA]</scope>
    <scope>PROTEIN SEQUENCE OF 75-113</scope>
    <scope>IDENTIFICATION BY MASS SPECTROMETRY</scope>
    <source>
        <tissue>Venom</tissue>
        <tissue>Venom gland</tissue>
    </source>
</reference>
<comment type="function">
    <text evidence="1">Probable ion channel inhibitor.</text>
</comment>
<comment type="subcellular location">
    <subcellularLocation>
        <location>Secreted</location>
    </subcellularLocation>
</comment>
<comment type="tissue specificity">
    <text>Expressed by the venom gland.</text>
</comment>
<comment type="domain">
    <text evidence="1">The presence of a 'disulfide through disulfide knot' structurally defines this protein as a knottin.</text>
</comment>
<comment type="similarity">
    <text evidence="5">Belongs to the neurotoxin 14 (magi-1) family. 01 (HNTX-16) subfamily.</text>
</comment>
<feature type="signal peptide" evidence="2">
    <location>
        <begin position="1"/>
        <end position="21"/>
    </location>
</feature>
<feature type="propeptide" id="PRO_0000400911" evidence="4">
    <location>
        <begin position="22"/>
        <end position="74"/>
    </location>
</feature>
<feature type="peptide" id="PRO_0000400912" description="U11-theraphotoxin-Hhn1a">
    <location>
        <begin position="75"/>
        <end position="113"/>
    </location>
</feature>
<feature type="region of interest" description="Disordered" evidence="3">
    <location>
        <begin position="60"/>
        <end position="83"/>
    </location>
</feature>
<feature type="compositionally biased region" description="Basic and acidic residues" evidence="3">
    <location>
        <begin position="60"/>
        <end position="69"/>
    </location>
</feature>
<feature type="disulfide bond" evidence="1">
    <location>
        <begin position="75"/>
        <end position="90"/>
    </location>
</feature>
<feature type="disulfide bond" evidence="1">
    <location>
        <begin position="82"/>
        <end position="95"/>
    </location>
</feature>
<feature type="disulfide bond" evidence="1">
    <location>
        <begin position="89"/>
        <end position="110"/>
    </location>
</feature>
<evidence type="ECO:0000250" key="1"/>
<evidence type="ECO:0000255" key="2"/>
<evidence type="ECO:0000256" key="3">
    <source>
        <dbReference type="SAM" id="MobiDB-lite"/>
    </source>
</evidence>
<evidence type="ECO:0000269" key="4">
    <source>
    </source>
</evidence>
<evidence type="ECO:0000305" key="5"/>
<organism>
    <name type="scientific">Cyriopagopus hainanus</name>
    <name type="common">Chinese bird spider</name>
    <name type="synonym">Haplopelma hainanum</name>
    <dbReference type="NCBI Taxonomy" id="209901"/>
    <lineage>
        <taxon>Eukaryota</taxon>
        <taxon>Metazoa</taxon>
        <taxon>Ecdysozoa</taxon>
        <taxon>Arthropoda</taxon>
        <taxon>Chelicerata</taxon>
        <taxon>Arachnida</taxon>
        <taxon>Araneae</taxon>
        <taxon>Mygalomorphae</taxon>
        <taxon>Theraphosidae</taxon>
        <taxon>Haplopelma</taxon>
    </lineage>
</organism>
<keyword id="KW-0903">Direct protein sequencing</keyword>
<keyword id="KW-1015">Disulfide bond</keyword>
<keyword id="KW-0872">Ion channel impairing toxin</keyword>
<keyword id="KW-0960">Knottin</keyword>
<keyword id="KW-0964">Secreted</keyword>
<keyword id="KW-0732">Signal</keyword>
<keyword id="KW-0800">Toxin</keyword>
<accession>D2Y2P3</accession>
<proteinExistence type="evidence at protein level"/>
<name>H1628_CYRHA</name>